<evidence type="ECO:0000255" key="1">
    <source>
        <dbReference type="HAMAP-Rule" id="MF_01916"/>
    </source>
</evidence>
<protein>
    <recommendedName>
        <fullName evidence="1">Cardiolipin synthase 1</fullName>
        <shortName evidence="1">CL synthase 1</shortName>
        <ecNumber evidence="1">2.7.8.-</ecNumber>
    </recommendedName>
</protein>
<proteinExistence type="inferred from homology"/>
<sequence length="493" mass="56339">MQFSFSNDLGTLFTIILAIGFIINLVLAFIIIFLERNRRTASSTWAWLFVLFVLPLIGFILYLFFGRTVSARKLNKNNGNVLTDFDGLLKQQIESFDKGNYGTDNKQVQKHHDLVRMLLMDQDGFLTENNKVDHFIDGNDLYDQVLKDIKNAKEYIHLEYYTFALDGLGKRILHALEEKLKQGLEVKILYDDVGSKNVKMANFDHFKSLGGEVEAFFASKLPLLNFRMNNRNHRKIIIIDGQLGYVGGFNIGDEYLGLGKLGYWRDTHLRIQGDAVDALQLRFILDWNSQAHRPQFEYDVKYFPKKNGPLGNSPIQIAASGPASDWHQIEYGYTKMIMSAKKSVYLQSPYFIPDNSYINAIKIAAKSGVDVHLMIPCKPDHPLVYWATFSNASDLLSSGVKIYTYENGFIHSKMCLIDDEIVSVGTANMDFRSFELNFEVNAFVYDENLAKDLRVAYEHDITKSKQLTEESYANRPLSVKFKESLAKLVSPIL</sequence>
<dbReference type="EC" id="2.7.8.-" evidence="1"/>
<dbReference type="EMBL" id="BX571856">
    <property type="protein sequence ID" value="CAG40327.1"/>
    <property type="molecule type" value="Genomic_DNA"/>
</dbReference>
<dbReference type="SMR" id="Q6GH88"/>
<dbReference type="KEGG" id="sar:SAR1328"/>
<dbReference type="HOGENOM" id="CLU_038053_1_1_9"/>
<dbReference type="Proteomes" id="UP000000596">
    <property type="component" value="Chromosome"/>
</dbReference>
<dbReference type="GO" id="GO:0005886">
    <property type="term" value="C:plasma membrane"/>
    <property type="evidence" value="ECO:0007669"/>
    <property type="project" value="UniProtKB-SubCell"/>
</dbReference>
<dbReference type="GO" id="GO:0008808">
    <property type="term" value="F:cardiolipin synthase activity"/>
    <property type="evidence" value="ECO:0007669"/>
    <property type="project" value="InterPro"/>
</dbReference>
<dbReference type="GO" id="GO:0032049">
    <property type="term" value="P:cardiolipin biosynthetic process"/>
    <property type="evidence" value="ECO:0007669"/>
    <property type="project" value="InterPro"/>
</dbReference>
<dbReference type="CDD" id="cd09110">
    <property type="entry name" value="PLDc_CLS_1"/>
    <property type="match status" value="1"/>
</dbReference>
<dbReference type="CDD" id="cd09112">
    <property type="entry name" value="PLDc_CLS_2"/>
    <property type="match status" value="1"/>
</dbReference>
<dbReference type="FunFam" id="3.30.870.10:FF:000014">
    <property type="entry name" value="Cardiolipin synthase"/>
    <property type="match status" value="1"/>
</dbReference>
<dbReference type="Gene3D" id="3.30.870.10">
    <property type="entry name" value="Endonuclease Chain A"/>
    <property type="match status" value="2"/>
</dbReference>
<dbReference type="HAMAP" id="MF_01916">
    <property type="entry name" value="Cardiolipin_synth_Cls"/>
    <property type="match status" value="1"/>
</dbReference>
<dbReference type="InterPro" id="IPR030874">
    <property type="entry name" value="Cardiolipin_synth_Firmi"/>
</dbReference>
<dbReference type="InterPro" id="IPR022924">
    <property type="entry name" value="Cardiolipin_synthase"/>
</dbReference>
<dbReference type="InterPro" id="IPR027379">
    <property type="entry name" value="CLS_N"/>
</dbReference>
<dbReference type="InterPro" id="IPR025202">
    <property type="entry name" value="PLD-like_dom"/>
</dbReference>
<dbReference type="InterPro" id="IPR001736">
    <property type="entry name" value="PLipase_D/transphosphatidylase"/>
</dbReference>
<dbReference type="NCBIfam" id="TIGR04265">
    <property type="entry name" value="bac_cardiolipin"/>
    <property type="match status" value="1"/>
</dbReference>
<dbReference type="PANTHER" id="PTHR21248">
    <property type="entry name" value="CARDIOLIPIN SYNTHASE"/>
    <property type="match status" value="1"/>
</dbReference>
<dbReference type="PANTHER" id="PTHR21248:SF22">
    <property type="entry name" value="PHOSPHOLIPASE D"/>
    <property type="match status" value="1"/>
</dbReference>
<dbReference type="Pfam" id="PF13091">
    <property type="entry name" value="PLDc_2"/>
    <property type="match status" value="2"/>
</dbReference>
<dbReference type="Pfam" id="PF13396">
    <property type="entry name" value="PLDc_N"/>
    <property type="match status" value="1"/>
</dbReference>
<dbReference type="SMART" id="SM00155">
    <property type="entry name" value="PLDc"/>
    <property type="match status" value="2"/>
</dbReference>
<dbReference type="SUPFAM" id="SSF56024">
    <property type="entry name" value="Phospholipase D/nuclease"/>
    <property type="match status" value="2"/>
</dbReference>
<dbReference type="PROSITE" id="PS50035">
    <property type="entry name" value="PLD"/>
    <property type="match status" value="2"/>
</dbReference>
<name>CLS1_STAAR</name>
<feature type="chain" id="PRO_0000201271" description="Cardiolipin synthase 1">
    <location>
        <begin position="1"/>
        <end position="493"/>
    </location>
</feature>
<feature type="transmembrane region" description="Helical" evidence="1">
    <location>
        <begin position="13"/>
        <end position="33"/>
    </location>
</feature>
<feature type="transmembrane region" description="Helical" evidence="1">
    <location>
        <begin position="45"/>
        <end position="65"/>
    </location>
</feature>
<feature type="domain" description="PLD phosphodiesterase 1" evidence="1">
    <location>
        <begin position="228"/>
        <end position="255"/>
    </location>
</feature>
<feature type="domain" description="PLD phosphodiesterase 2" evidence="1">
    <location>
        <begin position="406"/>
        <end position="433"/>
    </location>
</feature>
<feature type="active site" evidence="1">
    <location>
        <position position="233"/>
    </location>
</feature>
<feature type="active site" evidence="1">
    <location>
        <position position="235"/>
    </location>
</feature>
<feature type="active site" evidence="1">
    <location>
        <position position="240"/>
    </location>
</feature>
<feature type="active site" evidence="1">
    <location>
        <position position="411"/>
    </location>
</feature>
<feature type="active site" evidence="1">
    <location>
        <position position="413"/>
    </location>
</feature>
<feature type="active site" evidence="1">
    <location>
        <position position="418"/>
    </location>
</feature>
<reference key="1">
    <citation type="journal article" date="2004" name="Proc. Natl. Acad. Sci. U.S.A.">
        <title>Complete genomes of two clinical Staphylococcus aureus strains: evidence for the rapid evolution of virulence and drug resistance.</title>
        <authorList>
            <person name="Holden M.T.G."/>
            <person name="Feil E.J."/>
            <person name="Lindsay J.A."/>
            <person name="Peacock S.J."/>
            <person name="Day N.P.J."/>
            <person name="Enright M.C."/>
            <person name="Foster T.J."/>
            <person name="Moore C.E."/>
            <person name="Hurst L."/>
            <person name="Atkin R."/>
            <person name="Barron A."/>
            <person name="Bason N."/>
            <person name="Bentley S.D."/>
            <person name="Chillingworth C."/>
            <person name="Chillingworth T."/>
            <person name="Churcher C."/>
            <person name="Clark L."/>
            <person name="Corton C."/>
            <person name="Cronin A."/>
            <person name="Doggett J."/>
            <person name="Dowd L."/>
            <person name="Feltwell T."/>
            <person name="Hance Z."/>
            <person name="Harris B."/>
            <person name="Hauser H."/>
            <person name="Holroyd S."/>
            <person name="Jagels K."/>
            <person name="James K.D."/>
            <person name="Lennard N."/>
            <person name="Line A."/>
            <person name="Mayes R."/>
            <person name="Moule S."/>
            <person name="Mungall K."/>
            <person name="Ormond D."/>
            <person name="Quail M.A."/>
            <person name="Rabbinowitsch E."/>
            <person name="Rutherford K.M."/>
            <person name="Sanders M."/>
            <person name="Sharp S."/>
            <person name="Simmonds M."/>
            <person name="Stevens K."/>
            <person name="Whitehead S."/>
            <person name="Barrell B.G."/>
            <person name="Spratt B.G."/>
            <person name="Parkhill J."/>
        </authorList>
    </citation>
    <scope>NUCLEOTIDE SEQUENCE [LARGE SCALE GENOMIC DNA]</scope>
    <source>
        <strain>MRSA252</strain>
    </source>
</reference>
<organism>
    <name type="scientific">Staphylococcus aureus (strain MRSA252)</name>
    <dbReference type="NCBI Taxonomy" id="282458"/>
    <lineage>
        <taxon>Bacteria</taxon>
        <taxon>Bacillati</taxon>
        <taxon>Bacillota</taxon>
        <taxon>Bacilli</taxon>
        <taxon>Bacillales</taxon>
        <taxon>Staphylococcaceae</taxon>
        <taxon>Staphylococcus</taxon>
    </lineage>
</organism>
<accession>Q6GH88</accession>
<gene>
    <name type="primary">cls1</name>
    <name type="ordered locus">SAR1328</name>
</gene>
<keyword id="KW-1003">Cell membrane</keyword>
<keyword id="KW-0444">Lipid biosynthesis</keyword>
<keyword id="KW-0443">Lipid metabolism</keyword>
<keyword id="KW-0472">Membrane</keyword>
<keyword id="KW-0594">Phospholipid biosynthesis</keyword>
<keyword id="KW-1208">Phospholipid metabolism</keyword>
<keyword id="KW-0677">Repeat</keyword>
<keyword id="KW-0808">Transferase</keyword>
<keyword id="KW-0812">Transmembrane</keyword>
<keyword id="KW-1133">Transmembrane helix</keyword>
<comment type="function">
    <text evidence="1">Catalyzes the reversible phosphatidyl group transfer from one phosphatidylglycerol molecule to another to form cardiolipin (CL) (diphosphatidylglycerol) and glycerol.</text>
</comment>
<comment type="catalytic activity">
    <reaction evidence="1">
        <text>2 a 1,2-diacyl-sn-glycero-3-phospho-(1'-sn-glycerol) = a cardiolipin + glycerol</text>
        <dbReference type="Rhea" id="RHEA:31451"/>
        <dbReference type="ChEBI" id="CHEBI:17754"/>
        <dbReference type="ChEBI" id="CHEBI:62237"/>
        <dbReference type="ChEBI" id="CHEBI:64716"/>
    </reaction>
</comment>
<comment type="subcellular location">
    <subcellularLocation>
        <location evidence="1">Cell membrane</location>
        <topology evidence="1">Multi-pass membrane protein</topology>
    </subcellularLocation>
</comment>
<comment type="similarity">
    <text evidence="1">Belongs to the phospholipase D family. Cardiolipin synthase subfamily.</text>
</comment>